<dbReference type="EMBL" id="BA000030">
    <property type="protein sequence ID" value="BAC75197.1"/>
    <property type="molecule type" value="Genomic_DNA"/>
</dbReference>
<dbReference type="RefSeq" id="WP_010988881.1">
    <property type="nucleotide sequence ID" value="NZ_JZJK01000065.1"/>
</dbReference>
<dbReference type="SMR" id="Q825H1"/>
<dbReference type="MEROPS" id="I16.001"/>
<dbReference type="GeneID" id="41544557"/>
<dbReference type="KEGG" id="sma:SAVERM_7486"/>
<dbReference type="eggNOG" id="ENOG50333FU">
    <property type="taxonomic scope" value="Bacteria"/>
</dbReference>
<dbReference type="HOGENOM" id="CLU_121949_0_0_11"/>
<dbReference type="OrthoDB" id="3542626at2"/>
<dbReference type="Proteomes" id="UP000000428">
    <property type="component" value="Chromosome"/>
</dbReference>
<dbReference type="GO" id="GO:0005576">
    <property type="term" value="C:extracellular region"/>
    <property type="evidence" value="ECO:0007669"/>
    <property type="project" value="UniProtKB-SubCell"/>
</dbReference>
<dbReference type="GO" id="GO:0004867">
    <property type="term" value="F:serine-type endopeptidase inhibitor activity"/>
    <property type="evidence" value="ECO:0007669"/>
    <property type="project" value="UniProtKB-UniRule"/>
</dbReference>
<dbReference type="Gene3D" id="3.30.350.10">
    <property type="entry name" value="Subtilisin inhibitor-like"/>
    <property type="match status" value="1"/>
</dbReference>
<dbReference type="HAMAP" id="MF_00778">
    <property type="entry name" value="SSI"/>
    <property type="match status" value="1"/>
</dbReference>
<dbReference type="InterPro" id="IPR000691">
    <property type="entry name" value="Prot_inh_I16_SSI"/>
</dbReference>
<dbReference type="InterPro" id="IPR020054">
    <property type="entry name" value="Prot_inh_SSI_I16_CS"/>
</dbReference>
<dbReference type="InterPro" id="IPR023549">
    <property type="entry name" value="Subtilisin_inhibitor"/>
</dbReference>
<dbReference type="InterPro" id="IPR036819">
    <property type="entry name" value="Subtilisin_inhibitor-like_sf"/>
</dbReference>
<dbReference type="NCBIfam" id="NF009715">
    <property type="entry name" value="PRK13244.1-1"/>
    <property type="match status" value="1"/>
</dbReference>
<dbReference type="Pfam" id="PF00720">
    <property type="entry name" value="SSI"/>
    <property type="match status" value="1"/>
</dbReference>
<dbReference type="PRINTS" id="PR00294">
    <property type="entry name" value="SSBTLNINHBTR"/>
</dbReference>
<dbReference type="SUPFAM" id="SSF55399">
    <property type="entry name" value="Subtilisin inhibitor"/>
    <property type="match status" value="1"/>
</dbReference>
<dbReference type="PROSITE" id="PS00999">
    <property type="entry name" value="SSI"/>
    <property type="match status" value="1"/>
</dbReference>
<evidence type="ECO:0000250" key="1"/>
<evidence type="ECO:0000255" key="2"/>
<evidence type="ECO:0000305" key="3"/>
<keyword id="KW-1015">Disulfide bond</keyword>
<keyword id="KW-0646">Protease inhibitor</keyword>
<keyword id="KW-1185">Reference proteome</keyword>
<keyword id="KW-0964">Secreted</keyword>
<keyword id="KW-0722">Serine protease inhibitor</keyword>
<keyword id="KW-0732">Signal</keyword>
<organism>
    <name type="scientific">Streptomyces avermitilis (strain ATCC 31267 / DSM 46492 / JCM 5070 / NBRC 14893 / NCIMB 12804 / NRRL 8165 / MA-4680)</name>
    <dbReference type="NCBI Taxonomy" id="227882"/>
    <lineage>
        <taxon>Bacteria</taxon>
        <taxon>Bacillati</taxon>
        <taxon>Actinomycetota</taxon>
        <taxon>Actinomycetes</taxon>
        <taxon>Kitasatosporales</taxon>
        <taxon>Streptomycetaceae</taxon>
        <taxon>Streptomyces</taxon>
    </lineage>
</organism>
<feature type="signal peptide" evidence="2">
    <location>
        <begin position="1"/>
        <end position="34"/>
    </location>
</feature>
<feature type="chain" id="PRO_0000033271" description="Probable subtilase-type protease inhibitor">
    <location>
        <begin position="35"/>
        <end position="144"/>
    </location>
</feature>
<feature type="site" description="Reactive bond" evidence="1">
    <location>
        <begin position="104"/>
        <end position="105"/>
    </location>
</feature>
<feature type="disulfide bond" evidence="1">
    <location>
        <begin position="66"/>
        <end position="81"/>
    </location>
</feature>
<feature type="disulfide bond" evidence="1">
    <location>
        <begin position="102"/>
        <end position="132"/>
    </location>
</feature>
<reference key="1">
    <citation type="journal article" date="2001" name="Proc. Natl. Acad. Sci. U.S.A.">
        <title>Genome sequence of an industrial microorganism Streptomyces avermitilis: deducing the ability of producing secondary metabolites.</title>
        <authorList>
            <person name="Omura S."/>
            <person name="Ikeda H."/>
            <person name="Ishikawa J."/>
            <person name="Hanamoto A."/>
            <person name="Takahashi C."/>
            <person name="Shinose M."/>
            <person name="Takahashi Y."/>
            <person name="Horikawa H."/>
            <person name="Nakazawa H."/>
            <person name="Osonoe T."/>
            <person name="Kikuchi H."/>
            <person name="Shiba T."/>
            <person name="Sakaki Y."/>
            <person name="Hattori M."/>
        </authorList>
    </citation>
    <scope>NUCLEOTIDE SEQUENCE [LARGE SCALE GENOMIC DNA]</scope>
    <source>
        <strain>ATCC 31267 / DSM 46492 / JCM 5070 / NBRC 14893 / NCIMB 12804 / NRRL 8165 / MA-4680</strain>
    </source>
</reference>
<reference key="2">
    <citation type="journal article" date="2003" name="Nat. Biotechnol.">
        <title>Complete genome sequence and comparative analysis of the industrial microorganism Streptomyces avermitilis.</title>
        <authorList>
            <person name="Ikeda H."/>
            <person name="Ishikawa J."/>
            <person name="Hanamoto A."/>
            <person name="Shinose M."/>
            <person name="Kikuchi H."/>
            <person name="Shiba T."/>
            <person name="Sakaki Y."/>
            <person name="Hattori M."/>
            <person name="Omura S."/>
        </authorList>
    </citation>
    <scope>NUCLEOTIDE SEQUENCE [LARGE SCALE GENOMIC DNA]</scope>
    <source>
        <strain>ATCC 31267 / DSM 46492 / JCM 5070 / NBRC 14893 / NCIMB 12804 / NRRL 8165 / MA-4680</strain>
    </source>
</reference>
<protein>
    <recommendedName>
        <fullName>Probable subtilase-type protease inhibitor</fullName>
    </recommendedName>
</protein>
<proteinExistence type="inferred from homology"/>
<sequence>MPNTARWAVTLTLTATAVCGPLAGASLATPNAAASGLYAPSALVLTTGHGQSAATATPERAVTLNCAPTASGTHPAAVSACAELRATGGDFDALSARSDAMCTRQYDPVVVTVEGVWQGKRVAYERTFANECVKNSYGTTVFTF</sequence>
<gene>
    <name type="primary">sti1</name>
    <name type="ordered locus">SAV_7486</name>
</gene>
<name>SSI_STRAW</name>
<accession>Q825H1</accession>
<comment type="function">
    <text evidence="1">Strong inhibitor of bacterial serine proteases such as subtilisin.</text>
</comment>
<comment type="subunit">
    <text evidence="1">Homodimer.</text>
</comment>
<comment type="subcellular location">
    <subcellularLocation>
        <location evidence="1">Secreted</location>
    </subcellularLocation>
</comment>
<comment type="similarity">
    <text evidence="3">Belongs to the protease inhibitor I16 (SSI) family.</text>
</comment>